<proteinExistence type="inferred from homology"/>
<reference key="1">
    <citation type="journal article" date="1996" name="Science">
        <title>Complete genome sequence of the methanogenic archaeon, Methanococcus jannaschii.</title>
        <authorList>
            <person name="Bult C.J."/>
            <person name="White O."/>
            <person name="Olsen G.J."/>
            <person name="Zhou L."/>
            <person name="Fleischmann R.D."/>
            <person name="Sutton G.G."/>
            <person name="Blake J.A."/>
            <person name="FitzGerald L.M."/>
            <person name="Clayton R.A."/>
            <person name="Gocayne J.D."/>
            <person name="Kerlavage A.R."/>
            <person name="Dougherty B.A."/>
            <person name="Tomb J.-F."/>
            <person name="Adams M.D."/>
            <person name="Reich C.I."/>
            <person name="Overbeek R."/>
            <person name="Kirkness E.F."/>
            <person name="Weinstock K.G."/>
            <person name="Merrick J.M."/>
            <person name="Glodek A."/>
            <person name="Scott J.L."/>
            <person name="Geoghagen N.S.M."/>
            <person name="Weidman J.F."/>
            <person name="Fuhrmann J.L."/>
            <person name="Nguyen D."/>
            <person name="Utterback T.R."/>
            <person name="Kelley J.M."/>
            <person name="Peterson J.D."/>
            <person name="Sadow P.W."/>
            <person name="Hanna M.C."/>
            <person name="Cotton M.D."/>
            <person name="Roberts K.M."/>
            <person name="Hurst M.A."/>
            <person name="Kaine B.P."/>
            <person name="Borodovsky M."/>
            <person name="Klenk H.-P."/>
            <person name="Fraser C.M."/>
            <person name="Smith H.O."/>
            <person name="Woese C.R."/>
            <person name="Venter J.C."/>
        </authorList>
    </citation>
    <scope>NUCLEOTIDE SEQUENCE [LARGE SCALE GENOMIC DNA]</scope>
    <source>
        <strain>ATCC 43067 / DSM 2661 / JAL-1 / JCM 10045 / NBRC 100440</strain>
    </source>
</reference>
<comment type="similarity">
    <text evidence="3">Belongs to the tRNA methyltransferase O family.</text>
</comment>
<keyword id="KW-1185">Reference proteome</keyword>
<keyword id="KW-0949">S-adenosyl-L-methionine</keyword>
<organism>
    <name type="scientific">Methanocaldococcus jannaschii (strain ATCC 43067 / DSM 2661 / JAL-1 / JCM 10045 / NBRC 100440)</name>
    <name type="common">Methanococcus jannaschii</name>
    <dbReference type="NCBI Taxonomy" id="243232"/>
    <lineage>
        <taxon>Archaea</taxon>
        <taxon>Methanobacteriati</taxon>
        <taxon>Methanobacteriota</taxon>
        <taxon>Methanomada group</taxon>
        <taxon>Methanococci</taxon>
        <taxon>Methanococcales</taxon>
        <taxon>Methanocaldococcaceae</taxon>
        <taxon>Methanocaldococcus</taxon>
    </lineage>
</organism>
<name>Y1583_METJA</name>
<evidence type="ECO:0000250" key="1">
    <source>
        <dbReference type="UniProtKB" id="Q6NDF6"/>
    </source>
</evidence>
<evidence type="ECO:0000255" key="2">
    <source>
        <dbReference type="PROSITE-ProRule" id="PRU01003"/>
    </source>
</evidence>
<evidence type="ECO:0000305" key="3"/>
<feature type="chain" id="PRO_0000155623" description="Probable S-adenosyl-L-methionine-binding protein MJ1583">
    <location>
        <begin position="1"/>
        <end position="126"/>
    </location>
</feature>
<feature type="domain" description="TsaA-like" evidence="2">
    <location>
        <begin position="4"/>
        <end position="126"/>
    </location>
</feature>
<feature type="binding site" evidence="1">
    <location>
        <begin position="45"/>
        <end position="46"/>
    </location>
    <ligand>
        <name>S-adenosyl-L-methionine</name>
        <dbReference type="ChEBI" id="CHEBI:59789"/>
    </ligand>
</feature>
<feature type="binding site" evidence="1">
    <location>
        <position position="75"/>
    </location>
    <ligand>
        <name>S-adenosyl-L-methionine</name>
        <dbReference type="ChEBI" id="CHEBI:59789"/>
    </ligand>
</feature>
<feature type="binding site" evidence="1">
    <location>
        <begin position="106"/>
        <end position="109"/>
    </location>
    <ligand>
        <name>S-adenosyl-L-methionine</name>
        <dbReference type="ChEBI" id="CHEBI:59789"/>
    </ligand>
</feature>
<accession>Q58978</accession>
<gene>
    <name type="ordered locus">MJ1583</name>
</gene>
<protein>
    <recommendedName>
        <fullName>Probable S-adenosyl-L-methionine-binding protein MJ1583</fullName>
    </recommendedName>
</protein>
<sequence length="126" mass="14800">MYYLKPIGVVEQNENYTVLNIFDEFVEGLDGLKEGDYIIVLVWFHKNDSEEKRKILKVHPRGDINNPLKGVFATRSPYRPNPIGKYTVKIHKIYRNKIFIDKIDAYNETPIIDIKIFSEKLDCPKI</sequence>
<dbReference type="EMBL" id="L77117">
    <property type="protein sequence ID" value="AAB99603.1"/>
    <property type="molecule type" value="Genomic_DNA"/>
</dbReference>
<dbReference type="PIR" id="F64497">
    <property type="entry name" value="F64497"/>
</dbReference>
<dbReference type="RefSeq" id="WP_010871108.1">
    <property type="nucleotide sequence ID" value="NC_000909.1"/>
</dbReference>
<dbReference type="SMR" id="Q58978"/>
<dbReference type="STRING" id="243232.MJ_1583"/>
<dbReference type="PaxDb" id="243232-MJ_1583"/>
<dbReference type="EnsemblBacteria" id="AAB99603">
    <property type="protein sequence ID" value="AAB99603"/>
    <property type="gene ID" value="MJ_1583"/>
</dbReference>
<dbReference type="GeneID" id="1452492"/>
<dbReference type="KEGG" id="mja:MJ_1583"/>
<dbReference type="eggNOG" id="arCOG00761">
    <property type="taxonomic scope" value="Archaea"/>
</dbReference>
<dbReference type="HOGENOM" id="CLU_013458_2_2_2"/>
<dbReference type="InParanoid" id="Q58978"/>
<dbReference type="OrthoDB" id="40408at2157"/>
<dbReference type="PhylomeDB" id="Q58978"/>
<dbReference type="Proteomes" id="UP000000805">
    <property type="component" value="Chromosome"/>
</dbReference>
<dbReference type="CDD" id="cd09281">
    <property type="entry name" value="UPF0066"/>
    <property type="match status" value="1"/>
</dbReference>
<dbReference type="Gene3D" id="2.40.30.70">
    <property type="entry name" value="YaeB-like"/>
    <property type="match status" value="1"/>
</dbReference>
<dbReference type="InterPro" id="IPR023370">
    <property type="entry name" value="TrmO-like_N"/>
</dbReference>
<dbReference type="InterPro" id="IPR023368">
    <property type="entry name" value="UPF0066_cons_site"/>
</dbReference>
<dbReference type="InterPro" id="IPR040372">
    <property type="entry name" value="YaeB-like"/>
</dbReference>
<dbReference type="InterPro" id="IPR036413">
    <property type="entry name" value="YaeB-like_sf"/>
</dbReference>
<dbReference type="InterPro" id="IPR036414">
    <property type="entry name" value="YaeB_N_sf"/>
</dbReference>
<dbReference type="NCBIfam" id="TIGR00104">
    <property type="entry name" value="tRNA_TsaA"/>
    <property type="match status" value="1"/>
</dbReference>
<dbReference type="PANTHER" id="PTHR12818">
    <property type="entry name" value="TRNA (ADENINE(37)-N6)-METHYLTRANSFERASE"/>
    <property type="match status" value="1"/>
</dbReference>
<dbReference type="PANTHER" id="PTHR12818:SF0">
    <property type="entry name" value="TRNA (ADENINE(37)-N6)-METHYLTRANSFERASE"/>
    <property type="match status" value="1"/>
</dbReference>
<dbReference type="Pfam" id="PF01980">
    <property type="entry name" value="TrmO_N"/>
    <property type="match status" value="1"/>
</dbReference>
<dbReference type="SUPFAM" id="SSF118196">
    <property type="entry name" value="YaeB-like"/>
    <property type="match status" value="1"/>
</dbReference>
<dbReference type="PROSITE" id="PS01318">
    <property type="entry name" value="TSAA_1"/>
    <property type="match status" value="1"/>
</dbReference>
<dbReference type="PROSITE" id="PS51668">
    <property type="entry name" value="TSAA_2"/>
    <property type="match status" value="1"/>
</dbReference>